<comment type="function">
    <text>Light-harvesting photosynthetic bile pigment-protein from the phycobiliprotein complex (phycobilisome, PBS). Phycocyanin is the major phycobiliprotein in the PBS rod.</text>
</comment>
<comment type="subunit">
    <text evidence="2">Heterodimer of an alpha and a beta subunit, which further assembles into trimers and the trimers into hexamers. The basic functional unit of phycobiliproteins is a ring-shaped hexamer formed from two back-to-back trimers contacting via the alpha chain subunits. The trimers are composed of alpha/beta subunit heterodimers arranged around a three-fold axis of symmetry. The phycoerythrins also contain a gamma subunit which is located in the center of the hexamer.</text>
</comment>
<comment type="subcellular location">
    <subcellularLocation>
        <location evidence="1">Plastid</location>
        <location evidence="1">Chloroplast thylakoid membrane</location>
        <topology evidence="1">Peripheral membrane protein</topology>
        <orientation evidence="1">Stromal side</orientation>
    </subcellularLocation>
    <text evidence="1">Part of the phycobilisome rod.</text>
</comment>
<comment type="PTM">
    <text evidence="2">Contains two covalently linked bilin chromophores.</text>
</comment>
<comment type="similarity">
    <text evidence="3">Belongs to the phycobiliprotein family.</text>
</comment>
<organism>
    <name type="scientific">Porphyra purpurea</name>
    <name type="common">Red seaweed</name>
    <name type="synonym">Ulva purpurea</name>
    <dbReference type="NCBI Taxonomy" id="2787"/>
    <lineage>
        <taxon>Eukaryota</taxon>
        <taxon>Rhodophyta</taxon>
        <taxon>Bangiophyceae</taxon>
        <taxon>Bangiales</taxon>
        <taxon>Bangiaceae</taxon>
        <taxon>Porphyra</taxon>
    </lineage>
</organism>
<protein>
    <recommendedName>
        <fullName>C-phycocyanin beta chain</fullName>
    </recommendedName>
</protein>
<gene>
    <name type="primary">cpcB</name>
</gene>
<geneLocation type="chloroplast"/>
<keyword id="KW-0042">Antenna complex</keyword>
<keyword id="KW-0089">Bile pigment</keyword>
<keyword id="KW-0150">Chloroplast</keyword>
<keyword id="KW-0157">Chromophore</keyword>
<keyword id="KW-0249">Electron transport</keyword>
<keyword id="KW-0472">Membrane</keyword>
<keyword id="KW-0488">Methylation</keyword>
<keyword id="KW-0602">Photosynthesis</keyword>
<keyword id="KW-0605">Phycobilisome</keyword>
<keyword id="KW-0934">Plastid</keyword>
<keyword id="KW-0793">Thylakoid</keyword>
<keyword id="KW-0813">Transport</keyword>
<reference key="1">
    <citation type="journal article" date="1995" name="Plant Mol. Biol. Rep.">
        <title>Complete nucleotide sequence of the Porphyra purpurea chloroplast genome.</title>
        <authorList>
            <person name="Reith M.E."/>
            <person name="Munholland J."/>
        </authorList>
    </citation>
    <scope>NUCLEOTIDE SEQUENCE [LARGE SCALE GENOMIC DNA]</scope>
    <source>
        <strain>Avonport</strain>
    </source>
</reference>
<accession>P51377</accession>
<proteinExistence type="inferred from homology"/>
<feature type="chain" id="PRO_0000199151" description="C-phycocyanin beta chain">
    <location>
        <begin position="1"/>
        <end position="172"/>
    </location>
</feature>
<feature type="binding site" description="covalent" evidence="2">
    <location>
        <position position="82"/>
    </location>
    <ligand>
        <name>(2R,3E)-phycocyanobilin</name>
        <dbReference type="ChEBI" id="CHEBI:85275"/>
        <label>1</label>
    </ligand>
</feature>
<feature type="binding site" description="covalent" evidence="2">
    <location>
        <position position="153"/>
    </location>
    <ligand>
        <name>(2R,3E)-phycocyanobilin</name>
        <dbReference type="ChEBI" id="CHEBI:85275"/>
        <label>2</label>
    </ligand>
</feature>
<feature type="modified residue" description="N4-methylasparagine" evidence="2">
    <location>
        <position position="72"/>
    </location>
</feature>
<name>PHCB_PORPU</name>
<sequence>MLDAFAKVVAQADARGEFLSNTQLDALSSMVAEGNKRLDVVNKINSNASAIVTNSARALFAEQPQLIQPGGNAYTNRRMAACLRDMEIVLRYVSYAMIAGDSSVLDDRCLNGLRETYQALGTPGSSVSVAVQKMKEASVALANDLTGTPQGDCSALVAELGSYFDRAAVSVV</sequence>
<dbReference type="EMBL" id="U38804">
    <property type="protein sequence ID" value="AAC08263.1"/>
    <property type="molecule type" value="Genomic_DNA"/>
</dbReference>
<dbReference type="PIR" id="S73298">
    <property type="entry name" value="S73298"/>
</dbReference>
<dbReference type="RefSeq" id="NP_053987.1">
    <property type="nucleotide sequence ID" value="NC_000925.1"/>
</dbReference>
<dbReference type="SMR" id="P51377"/>
<dbReference type="GeneID" id="810016"/>
<dbReference type="GO" id="GO:0009535">
    <property type="term" value="C:chloroplast thylakoid membrane"/>
    <property type="evidence" value="ECO:0007669"/>
    <property type="project" value="UniProtKB-SubCell"/>
</dbReference>
<dbReference type="GO" id="GO:0030089">
    <property type="term" value="C:phycobilisome"/>
    <property type="evidence" value="ECO:0007669"/>
    <property type="project" value="UniProtKB-KW"/>
</dbReference>
<dbReference type="GO" id="GO:0015979">
    <property type="term" value="P:photosynthesis"/>
    <property type="evidence" value="ECO:0007669"/>
    <property type="project" value="UniProtKB-KW"/>
</dbReference>
<dbReference type="CDD" id="cd14768">
    <property type="entry name" value="PC_PEC_beta"/>
    <property type="match status" value="1"/>
</dbReference>
<dbReference type="Gene3D" id="1.10.490.20">
    <property type="entry name" value="Phycocyanins"/>
    <property type="match status" value="1"/>
</dbReference>
<dbReference type="InterPro" id="IPR009050">
    <property type="entry name" value="Globin-like_sf"/>
</dbReference>
<dbReference type="InterPro" id="IPR012128">
    <property type="entry name" value="Phycobilisome_asu/bsu"/>
</dbReference>
<dbReference type="InterPro" id="IPR038719">
    <property type="entry name" value="Phycobilisome_asu/bsu_sf"/>
</dbReference>
<dbReference type="InterPro" id="IPR006247">
    <property type="entry name" value="Phycocyanin_b"/>
</dbReference>
<dbReference type="NCBIfam" id="TIGR01339">
    <property type="entry name" value="phycocy_beta"/>
    <property type="match status" value="1"/>
</dbReference>
<dbReference type="PANTHER" id="PTHR34011:SF7">
    <property type="entry name" value="C-PHYCOCYANIN BETA SUBUNIT"/>
    <property type="match status" value="1"/>
</dbReference>
<dbReference type="PANTHER" id="PTHR34011">
    <property type="entry name" value="PHYCOBILISOME 32.1 KDA LINKER POLYPEPTIDE, PHYCOCYANIN-ASSOCIATED, ROD 2-RELATED"/>
    <property type="match status" value="1"/>
</dbReference>
<dbReference type="Pfam" id="PF00502">
    <property type="entry name" value="Phycobilisome"/>
    <property type="match status" value="1"/>
</dbReference>
<dbReference type="PIRSF" id="PIRSF000081">
    <property type="entry name" value="Phycocyanin"/>
    <property type="match status" value="1"/>
</dbReference>
<dbReference type="SUPFAM" id="SSF46458">
    <property type="entry name" value="Globin-like"/>
    <property type="match status" value="1"/>
</dbReference>
<evidence type="ECO:0000250" key="1"/>
<evidence type="ECO:0000250" key="2">
    <source>
        <dbReference type="UniProtKB" id="P00311"/>
    </source>
</evidence>
<evidence type="ECO:0000305" key="3"/>